<evidence type="ECO:0000255" key="1">
    <source>
        <dbReference type="HAMAP-Rule" id="MF_00537"/>
    </source>
</evidence>
<evidence type="ECO:0000305" key="2"/>
<dbReference type="EMBL" id="AE003849">
    <property type="protein sequence ID" value="AAF83975.1"/>
    <property type="molecule type" value="Genomic_DNA"/>
</dbReference>
<dbReference type="PIR" id="E82718">
    <property type="entry name" value="E82718"/>
</dbReference>
<dbReference type="RefSeq" id="WP_010893679.1">
    <property type="nucleotide sequence ID" value="NC_002488.3"/>
</dbReference>
<dbReference type="SMR" id="Q9PE63"/>
<dbReference type="STRING" id="160492.XF_1165"/>
<dbReference type="KEGG" id="xfa:XF_1165"/>
<dbReference type="eggNOG" id="COG0199">
    <property type="taxonomic scope" value="Bacteria"/>
</dbReference>
<dbReference type="HOGENOM" id="CLU_139869_0_1_6"/>
<dbReference type="Proteomes" id="UP000000812">
    <property type="component" value="Chromosome"/>
</dbReference>
<dbReference type="GO" id="GO:0005737">
    <property type="term" value="C:cytoplasm"/>
    <property type="evidence" value="ECO:0007669"/>
    <property type="project" value="UniProtKB-ARBA"/>
</dbReference>
<dbReference type="GO" id="GO:0015935">
    <property type="term" value="C:small ribosomal subunit"/>
    <property type="evidence" value="ECO:0007669"/>
    <property type="project" value="TreeGrafter"/>
</dbReference>
<dbReference type="GO" id="GO:0019843">
    <property type="term" value="F:rRNA binding"/>
    <property type="evidence" value="ECO:0007669"/>
    <property type="project" value="UniProtKB-UniRule"/>
</dbReference>
<dbReference type="GO" id="GO:0003735">
    <property type="term" value="F:structural constituent of ribosome"/>
    <property type="evidence" value="ECO:0007669"/>
    <property type="project" value="InterPro"/>
</dbReference>
<dbReference type="GO" id="GO:0006412">
    <property type="term" value="P:translation"/>
    <property type="evidence" value="ECO:0007669"/>
    <property type="project" value="UniProtKB-UniRule"/>
</dbReference>
<dbReference type="FunFam" id="1.10.287.1480:FF:000001">
    <property type="entry name" value="30S ribosomal protein S14"/>
    <property type="match status" value="1"/>
</dbReference>
<dbReference type="Gene3D" id="1.10.287.1480">
    <property type="match status" value="1"/>
</dbReference>
<dbReference type="HAMAP" id="MF_00537">
    <property type="entry name" value="Ribosomal_uS14_1"/>
    <property type="match status" value="1"/>
</dbReference>
<dbReference type="InterPro" id="IPR001209">
    <property type="entry name" value="Ribosomal_uS14"/>
</dbReference>
<dbReference type="InterPro" id="IPR023036">
    <property type="entry name" value="Ribosomal_uS14_bac/plastid"/>
</dbReference>
<dbReference type="NCBIfam" id="NF006477">
    <property type="entry name" value="PRK08881.1"/>
    <property type="match status" value="1"/>
</dbReference>
<dbReference type="PANTHER" id="PTHR19836">
    <property type="entry name" value="30S RIBOSOMAL PROTEIN S14"/>
    <property type="match status" value="1"/>
</dbReference>
<dbReference type="PANTHER" id="PTHR19836:SF19">
    <property type="entry name" value="SMALL RIBOSOMAL SUBUNIT PROTEIN US14M"/>
    <property type="match status" value="1"/>
</dbReference>
<dbReference type="Pfam" id="PF00253">
    <property type="entry name" value="Ribosomal_S14"/>
    <property type="match status" value="1"/>
</dbReference>
<dbReference type="SUPFAM" id="SSF57716">
    <property type="entry name" value="Glucocorticoid receptor-like (DNA-binding domain)"/>
    <property type="match status" value="1"/>
</dbReference>
<keyword id="KW-0687">Ribonucleoprotein</keyword>
<keyword id="KW-0689">Ribosomal protein</keyword>
<keyword id="KW-0694">RNA-binding</keyword>
<keyword id="KW-0699">rRNA-binding</keyword>
<protein>
    <recommendedName>
        <fullName evidence="1">Small ribosomal subunit protein uS14</fullName>
    </recommendedName>
    <alternativeName>
        <fullName evidence="2">30S ribosomal protein S14</fullName>
    </alternativeName>
</protein>
<reference key="1">
    <citation type="journal article" date="2000" name="Nature">
        <title>The genome sequence of the plant pathogen Xylella fastidiosa.</title>
        <authorList>
            <person name="Simpson A.J.G."/>
            <person name="Reinach F.C."/>
            <person name="Arruda P."/>
            <person name="Abreu F.A."/>
            <person name="Acencio M."/>
            <person name="Alvarenga R."/>
            <person name="Alves L.M.C."/>
            <person name="Araya J.E."/>
            <person name="Baia G.S."/>
            <person name="Baptista C.S."/>
            <person name="Barros M.H."/>
            <person name="Bonaccorsi E.D."/>
            <person name="Bordin S."/>
            <person name="Bove J.M."/>
            <person name="Briones M.R.S."/>
            <person name="Bueno M.R.P."/>
            <person name="Camargo A.A."/>
            <person name="Camargo L.E.A."/>
            <person name="Carraro D.M."/>
            <person name="Carrer H."/>
            <person name="Colauto N.B."/>
            <person name="Colombo C."/>
            <person name="Costa F.F."/>
            <person name="Costa M.C.R."/>
            <person name="Costa-Neto C.M."/>
            <person name="Coutinho L.L."/>
            <person name="Cristofani M."/>
            <person name="Dias-Neto E."/>
            <person name="Docena C."/>
            <person name="El-Dorry H."/>
            <person name="Facincani A.P."/>
            <person name="Ferreira A.J.S."/>
            <person name="Ferreira V.C.A."/>
            <person name="Ferro J.A."/>
            <person name="Fraga J.S."/>
            <person name="Franca S.C."/>
            <person name="Franco M.C."/>
            <person name="Frohme M."/>
            <person name="Furlan L.R."/>
            <person name="Garnier M."/>
            <person name="Goldman G.H."/>
            <person name="Goldman M.H.S."/>
            <person name="Gomes S.L."/>
            <person name="Gruber A."/>
            <person name="Ho P.L."/>
            <person name="Hoheisel J.D."/>
            <person name="Junqueira M.L."/>
            <person name="Kemper E.L."/>
            <person name="Kitajima J.P."/>
            <person name="Krieger J.E."/>
            <person name="Kuramae E.E."/>
            <person name="Laigret F."/>
            <person name="Lambais M.R."/>
            <person name="Leite L.C.C."/>
            <person name="Lemos E.G.M."/>
            <person name="Lemos M.V.F."/>
            <person name="Lopes S.A."/>
            <person name="Lopes C.R."/>
            <person name="Machado J.A."/>
            <person name="Machado M.A."/>
            <person name="Madeira A.M.B.N."/>
            <person name="Madeira H.M.F."/>
            <person name="Marino C.L."/>
            <person name="Marques M.V."/>
            <person name="Martins E.A.L."/>
            <person name="Martins E.M.F."/>
            <person name="Matsukuma A.Y."/>
            <person name="Menck C.F.M."/>
            <person name="Miracca E.C."/>
            <person name="Miyaki C.Y."/>
            <person name="Monteiro-Vitorello C.B."/>
            <person name="Moon D.H."/>
            <person name="Nagai M.A."/>
            <person name="Nascimento A.L.T.O."/>
            <person name="Netto L.E.S."/>
            <person name="Nhani A. Jr."/>
            <person name="Nobrega F.G."/>
            <person name="Nunes L.R."/>
            <person name="Oliveira M.A."/>
            <person name="de Oliveira M.C."/>
            <person name="de Oliveira R.C."/>
            <person name="Palmieri D.A."/>
            <person name="Paris A."/>
            <person name="Peixoto B.R."/>
            <person name="Pereira G.A.G."/>
            <person name="Pereira H.A. Jr."/>
            <person name="Pesquero J.B."/>
            <person name="Quaggio R.B."/>
            <person name="Roberto P.G."/>
            <person name="Rodrigues V."/>
            <person name="de Rosa A.J.M."/>
            <person name="de Rosa V.E. Jr."/>
            <person name="de Sa R.G."/>
            <person name="Santelli R.V."/>
            <person name="Sawasaki H.E."/>
            <person name="da Silva A.C.R."/>
            <person name="da Silva A.M."/>
            <person name="da Silva F.R."/>
            <person name="Silva W.A. Jr."/>
            <person name="da Silveira J.F."/>
            <person name="Silvestri M.L.Z."/>
            <person name="Siqueira W.J."/>
            <person name="de Souza A.A."/>
            <person name="de Souza A.P."/>
            <person name="Terenzi M.F."/>
            <person name="Truffi D."/>
            <person name="Tsai S.M."/>
            <person name="Tsuhako M.H."/>
            <person name="Vallada H."/>
            <person name="Van Sluys M.A."/>
            <person name="Verjovski-Almeida S."/>
            <person name="Vettore A.L."/>
            <person name="Zago M.A."/>
            <person name="Zatz M."/>
            <person name="Meidanis J."/>
            <person name="Setubal J.C."/>
        </authorList>
    </citation>
    <scope>NUCLEOTIDE SEQUENCE [LARGE SCALE GENOMIC DNA]</scope>
    <source>
        <strain>9a5c</strain>
    </source>
</reference>
<feature type="chain" id="PRO_0000130960" description="Small ribosomal subunit protein uS14">
    <location>
        <begin position="1"/>
        <end position="101"/>
    </location>
</feature>
<name>RS14_XYLFA</name>
<gene>
    <name evidence="1" type="primary">rpsN</name>
    <name type="ordered locus">XF_1165</name>
</gene>
<accession>Q9PE63</accession>
<organism>
    <name type="scientific">Xylella fastidiosa (strain 9a5c)</name>
    <dbReference type="NCBI Taxonomy" id="160492"/>
    <lineage>
        <taxon>Bacteria</taxon>
        <taxon>Pseudomonadati</taxon>
        <taxon>Pseudomonadota</taxon>
        <taxon>Gammaproteobacteria</taxon>
        <taxon>Lysobacterales</taxon>
        <taxon>Lysobacteraceae</taxon>
        <taxon>Xylella</taxon>
    </lineage>
</organism>
<proteinExistence type="inferred from homology"/>
<sequence length="101" mass="11554">MAKISMINRDLKRKRLAKKFADKRLSLKKVISSDASSYEEKIEASCKLQKLPRDSSPTRLRNRCEISGRPRGVYCKFGLGRNKLREAAMRGDVPGLRKASW</sequence>
<comment type="function">
    <text evidence="1">Binds 16S rRNA, required for the assembly of 30S particles and may also be responsible for determining the conformation of the 16S rRNA at the A site.</text>
</comment>
<comment type="subunit">
    <text evidence="1">Part of the 30S ribosomal subunit. Contacts proteins S3 and S10.</text>
</comment>
<comment type="similarity">
    <text evidence="1">Belongs to the universal ribosomal protein uS14 family.</text>
</comment>